<name>PURQ_HALWD</name>
<feature type="chain" id="PRO_0000252743" description="Phosphoribosylformylglycinamidine synthase subunit PurQ">
    <location>
        <begin position="1"/>
        <end position="228"/>
    </location>
</feature>
<feature type="domain" description="Glutamine amidotransferase type-1" evidence="1">
    <location>
        <begin position="2"/>
        <end position="228"/>
    </location>
</feature>
<feature type="active site" description="Nucleophile" evidence="1">
    <location>
        <position position="88"/>
    </location>
</feature>
<feature type="active site" evidence="1">
    <location>
        <position position="205"/>
    </location>
</feature>
<feature type="active site" evidence="1">
    <location>
        <position position="207"/>
    </location>
</feature>
<sequence>MTVVVVQFGGSNCDRDAVRALQHIGIDATRVWHEDGLNDSVENLDGIILPGGFSYGDYLRAGAMAAHSPIVNDIQAAAERGIPVLGVCNGAQVGCESGLTPGAFTTNDRARFQCETVHLRVENATTPWTEAYEAGTVIEIPIAHGEGRFEITENEYEMLKNDNQILFRYCDASGNITDDANPNGSRGNVAGITGNYDTVAVLMPHPERATLPELGRSTDGKGILQAFG</sequence>
<gene>
    <name evidence="1" type="primary">purQ</name>
    <name type="ordered locus">HQ_3131A</name>
</gene>
<accession>Q18FM4</accession>
<reference key="1">
    <citation type="journal article" date="2006" name="BMC Genomics">
        <title>The genome of the square archaeon Haloquadratum walsbyi: life at the limits of water activity.</title>
        <authorList>
            <person name="Bolhuis H."/>
            <person name="Palm P."/>
            <person name="Wende A."/>
            <person name="Falb M."/>
            <person name="Rampp M."/>
            <person name="Rodriguez-Valera F."/>
            <person name="Pfeiffer F."/>
            <person name="Oesterhelt D."/>
        </authorList>
    </citation>
    <scope>NUCLEOTIDE SEQUENCE [LARGE SCALE GENOMIC DNA]</scope>
    <source>
        <strain>DSM 16790 / HBSQ001</strain>
    </source>
</reference>
<organism>
    <name type="scientific">Haloquadratum walsbyi (strain DSM 16790 / HBSQ001)</name>
    <dbReference type="NCBI Taxonomy" id="362976"/>
    <lineage>
        <taxon>Archaea</taxon>
        <taxon>Methanobacteriati</taxon>
        <taxon>Methanobacteriota</taxon>
        <taxon>Stenosarchaea group</taxon>
        <taxon>Halobacteria</taxon>
        <taxon>Halobacteriales</taxon>
        <taxon>Haloferacaceae</taxon>
        <taxon>Haloquadratum</taxon>
    </lineage>
</organism>
<protein>
    <recommendedName>
        <fullName evidence="1">Phosphoribosylformylglycinamidine synthase subunit PurQ</fullName>
        <shortName evidence="1">FGAM synthase</shortName>
        <ecNumber evidence="1">6.3.5.3</ecNumber>
    </recommendedName>
    <alternativeName>
        <fullName evidence="1">Formylglycinamide ribonucleotide amidotransferase subunit I</fullName>
        <shortName evidence="1">FGAR amidotransferase I</shortName>
        <shortName evidence="1">FGAR-AT I</shortName>
    </alternativeName>
    <alternativeName>
        <fullName evidence="1">Glutaminase PurQ</fullName>
        <ecNumber evidence="1">3.5.1.2</ecNumber>
    </alternativeName>
    <alternativeName>
        <fullName evidence="1">Phosphoribosylformylglycinamidine synthase subunit I</fullName>
    </alternativeName>
</protein>
<evidence type="ECO:0000255" key="1">
    <source>
        <dbReference type="HAMAP-Rule" id="MF_00421"/>
    </source>
</evidence>
<proteinExistence type="inferred from homology"/>
<dbReference type="EC" id="6.3.5.3" evidence="1"/>
<dbReference type="EC" id="3.5.1.2" evidence="1"/>
<dbReference type="EMBL" id="AM180088">
    <property type="protein sequence ID" value="CAJ53231.1"/>
    <property type="molecule type" value="Genomic_DNA"/>
</dbReference>
<dbReference type="RefSeq" id="WP_011572338.1">
    <property type="nucleotide sequence ID" value="NC_008212.1"/>
</dbReference>
<dbReference type="SMR" id="Q18FM4"/>
<dbReference type="STRING" id="362976.HQ_3131A"/>
<dbReference type="GeneID" id="4194539"/>
<dbReference type="KEGG" id="hwa:HQ_3131A"/>
<dbReference type="eggNOG" id="arCOG00102">
    <property type="taxonomic scope" value="Archaea"/>
</dbReference>
<dbReference type="HOGENOM" id="CLU_001031_3_1_2"/>
<dbReference type="UniPathway" id="UPA00074">
    <property type="reaction ID" value="UER00128"/>
</dbReference>
<dbReference type="Proteomes" id="UP000001975">
    <property type="component" value="Chromosome"/>
</dbReference>
<dbReference type="GO" id="GO:0005737">
    <property type="term" value="C:cytoplasm"/>
    <property type="evidence" value="ECO:0007669"/>
    <property type="project" value="UniProtKB-SubCell"/>
</dbReference>
<dbReference type="GO" id="GO:0005524">
    <property type="term" value="F:ATP binding"/>
    <property type="evidence" value="ECO:0007669"/>
    <property type="project" value="UniProtKB-KW"/>
</dbReference>
<dbReference type="GO" id="GO:0004359">
    <property type="term" value="F:glutaminase activity"/>
    <property type="evidence" value="ECO:0007669"/>
    <property type="project" value="UniProtKB-EC"/>
</dbReference>
<dbReference type="GO" id="GO:0004642">
    <property type="term" value="F:phosphoribosylformylglycinamidine synthase activity"/>
    <property type="evidence" value="ECO:0007669"/>
    <property type="project" value="UniProtKB-UniRule"/>
</dbReference>
<dbReference type="GO" id="GO:0006189">
    <property type="term" value="P:'de novo' IMP biosynthetic process"/>
    <property type="evidence" value="ECO:0007669"/>
    <property type="project" value="UniProtKB-UniRule"/>
</dbReference>
<dbReference type="CDD" id="cd01740">
    <property type="entry name" value="GATase1_FGAR_AT"/>
    <property type="match status" value="1"/>
</dbReference>
<dbReference type="Gene3D" id="3.40.50.880">
    <property type="match status" value="1"/>
</dbReference>
<dbReference type="HAMAP" id="MF_00421">
    <property type="entry name" value="PurQ"/>
    <property type="match status" value="1"/>
</dbReference>
<dbReference type="InterPro" id="IPR029062">
    <property type="entry name" value="Class_I_gatase-like"/>
</dbReference>
<dbReference type="InterPro" id="IPR010075">
    <property type="entry name" value="PRibForGlyAmidine_synth_PurQ"/>
</dbReference>
<dbReference type="NCBIfam" id="TIGR01737">
    <property type="entry name" value="FGAM_synth_I"/>
    <property type="match status" value="1"/>
</dbReference>
<dbReference type="NCBIfam" id="NF002957">
    <property type="entry name" value="PRK03619.1"/>
    <property type="match status" value="1"/>
</dbReference>
<dbReference type="PANTHER" id="PTHR47552">
    <property type="entry name" value="PHOSPHORIBOSYLFORMYLGLYCINAMIDINE SYNTHASE SUBUNIT PURQ"/>
    <property type="match status" value="1"/>
</dbReference>
<dbReference type="PANTHER" id="PTHR47552:SF1">
    <property type="entry name" value="PHOSPHORIBOSYLFORMYLGLYCINAMIDINE SYNTHASE SUBUNIT PURQ"/>
    <property type="match status" value="1"/>
</dbReference>
<dbReference type="Pfam" id="PF13507">
    <property type="entry name" value="GATase_5"/>
    <property type="match status" value="1"/>
</dbReference>
<dbReference type="PIRSF" id="PIRSF001586">
    <property type="entry name" value="FGAM_synth_I"/>
    <property type="match status" value="1"/>
</dbReference>
<dbReference type="SMART" id="SM01211">
    <property type="entry name" value="GATase_5"/>
    <property type="match status" value="1"/>
</dbReference>
<dbReference type="SUPFAM" id="SSF52317">
    <property type="entry name" value="Class I glutamine amidotransferase-like"/>
    <property type="match status" value="1"/>
</dbReference>
<dbReference type="PROSITE" id="PS51273">
    <property type="entry name" value="GATASE_TYPE_1"/>
    <property type="match status" value="1"/>
</dbReference>
<comment type="function">
    <text evidence="1">Part of the phosphoribosylformylglycinamidine synthase complex involved in the purines biosynthetic pathway. Catalyzes the ATP-dependent conversion of formylglycinamide ribonucleotide (FGAR) and glutamine to yield formylglycinamidine ribonucleotide (FGAM) and glutamate. The FGAM synthase complex is composed of three subunits. PurQ produces an ammonia molecule by converting glutamine to glutamate. PurL transfers the ammonia molecule to FGAR to form FGAM in an ATP-dependent manner. PurS interacts with PurQ and PurL and is thought to assist in the transfer of the ammonia molecule from PurQ to PurL.</text>
</comment>
<comment type="catalytic activity">
    <reaction evidence="1">
        <text>N(2)-formyl-N(1)-(5-phospho-beta-D-ribosyl)glycinamide + L-glutamine + ATP + H2O = 2-formamido-N(1)-(5-O-phospho-beta-D-ribosyl)acetamidine + L-glutamate + ADP + phosphate + H(+)</text>
        <dbReference type="Rhea" id="RHEA:17129"/>
        <dbReference type="ChEBI" id="CHEBI:15377"/>
        <dbReference type="ChEBI" id="CHEBI:15378"/>
        <dbReference type="ChEBI" id="CHEBI:29985"/>
        <dbReference type="ChEBI" id="CHEBI:30616"/>
        <dbReference type="ChEBI" id="CHEBI:43474"/>
        <dbReference type="ChEBI" id="CHEBI:58359"/>
        <dbReference type="ChEBI" id="CHEBI:147286"/>
        <dbReference type="ChEBI" id="CHEBI:147287"/>
        <dbReference type="ChEBI" id="CHEBI:456216"/>
        <dbReference type="EC" id="6.3.5.3"/>
    </reaction>
</comment>
<comment type="catalytic activity">
    <reaction evidence="1">
        <text>L-glutamine + H2O = L-glutamate + NH4(+)</text>
        <dbReference type="Rhea" id="RHEA:15889"/>
        <dbReference type="ChEBI" id="CHEBI:15377"/>
        <dbReference type="ChEBI" id="CHEBI:28938"/>
        <dbReference type="ChEBI" id="CHEBI:29985"/>
        <dbReference type="ChEBI" id="CHEBI:58359"/>
        <dbReference type="EC" id="3.5.1.2"/>
    </reaction>
</comment>
<comment type="pathway">
    <text evidence="1">Purine metabolism; IMP biosynthesis via de novo pathway; 5-amino-1-(5-phospho-D-ribosyl)imidazole from N(2)-formyl-N(1)-(5-phospho-D-ribosyl)glycinamide: step 1/2.</text>
</comment>
<comment type="subunit">
    <text evidence="1">Part of the FGAM synthase complex composed of 1 PurL, 1 PurQ and 2 PurS subunits.</text>
</comment>
<comment type="subcellular location">
    <subcellularLocation>
        <location evidence="1">Cytoplasm</location>
    </subcellularLocation>
</comment>
<keyword id="KW-0067">ATP-binding</keyword>
<keyword id="KW-0963">Cytoplasm</keyword>
<keyword id="KW-0315">Glutamine amidotransferase</keyword>
<keyword id="KW-0378">Hydrolase</keyword>
<keyword id="KW-0436">Ligase</keyword>
<keyword id="KW-0547">Nucleotide-binding</keyword>
<keyword id="KW-0658">Purine biosynthesis</keyword>
<keyword id="KW-1185">Reference proteome</keyword>